<accession>Q502J7</accession>
<reference key="1">
    <citation type="submission" date="2005-05" db="EMBL/GenBank/DDBJ databases">
        <authorList>
            <consortium name="NIH - Zebrafish Gene Collection (ZGC) project"/>
        </authorList>
    </citation>
    <scope>NUCLEOTIDE SEQUENCE [LARGE SCALE MRNA]</scope>
    <source>
        <tissue>Heart</tissue>
    </source>
</reference>
<organism>
    <name type="scientific">Danio rerio</name>
    <name type="common">Zebrafish</name>
    <name type="synonym">Brachydanio rerio</name>
    <dbReference type="NCBI Taxonomy" id="7955"/>
    <lineage>
        <taxon>Eukaryota</taxon>
        <taxon>Metazoa</taxon>
        <taxon>Chordata</taxon>
        <taxon>Craniata</taxon>
        <taxon>Vertebrata</taxon>
        <taxon>Euteleostomi</taxon>
        <taxon>Actinopterygii</taxon>
        <taxon>Neopterygii</taxon>
        <taxon>Teleostei</taxon>
        <taxon>Ostariophysi</taxon>
        <taxon>Cypriniformes</taxon>
        <taxon>Danionidae</taxon>
        <taxon>Danioninae</taxon>
        <taxon>Danio</taxon>
    </lineage>
</organism>
<feature type="chain" id="PRO_0000327736" description="Dynactin subunit 6">
    <location>
        <begin position="1"/>
        <end position="195"/>
    </location>
</feature>
<dbReference type="EMBL" id="BC095670">
    <property type="protein sequence ID" value="AAH95670.1"/>
    <property type="molecule type" value="mRNA"/>
</dbReference>
<dbReference type="RefSeq" id="NP_001018487.1">
    <property type="nucleotide sequence ID" value="NM_001020651.1"/>
</dbReference>
<dbReference type="SMR" id="Q502J7"/>
<dbReference type="FunCoup" id="Q502J7">
    <property type="interactions" value="919"/>
</dbReference>
<dbReference type="GeneID" id="553678"/>
<dbReference type="KEGG" id="dre:553678"/>
<dbReference type="AGR" id="ZFIN:ZDB-GENE-050522-237"/>
<dbReference type="ZFIN" id="ZDB-GENE-050522-237">
    <property type="gene designation" value="zgc:112102"/>
</dbReference>
<dbReference type="InParanoid" id="Q502J7"/>
<dbReference type="OrthoDB" id="2355at2759"/>
<dbReference type="PhylomeDB" id="Q502J7"/>
<dbReference type="PRO" id="PR:Q502J7"/>
<dbReference type="Proteomes" id="UP000000437">
    <property type="component" value="Chromosome 7"/>
</dbReference>
<dbReference type="GO" id="GO:0005737">
    <property type="term" value="C:cytoplasm"/>
    <property type="evidence" value="ECO:0007669"/>
    <property type="project" value="UniProtKB-KW"/>
</dbReference>
<dbReference type="GO" id="GO:0005869">
    <property type="term" value="C:dynactin complex"/>
    <property type="evidence" value="ECO:0000318"/>
    <property type="project" value="GO_Central"/>
</dbReference>
<dbReference type="GO" id="GO:0000776">
    <property type="term" value="C:kinetochore"/>
    <property type="evidence" value="ECO:0007669"/>
    <property type="project" value="UniProtKB-KW"/>
</dbReference>
<dbReference type="GO" id="GO:0070840">
    <property type="term" value="F:dynein complex binding"/>
    <property type="evidence" value="ECO:0000318"/>
    <property type="project" value="GO_Central"/>
</dbReference>
<dbReference type="GO" id="GO:0007052">
    <property type="term" value="P:mitotic spindle organization"/>
    <property type="evidence" value="ECO:0000318"/>
    <property type="project" value="GO_Central"/>
</dbReference>
<dbReference type="CDD" id="cd04646">
    <property type="entry name" value="LbH_Dynactin_6"/>
    <property type="match status" value="1"/>
</dbReference>
<dbReference type="Gene3D" id="2.160.10.10">
    <property type="entry name" value="Hexapeptide repeat proteins"/>
    <property type="match status" value="1"/>
</dbReference>
<dbReference type="InterPro" id="IPR027777">
    <property type="entry name" value="DCTN6"/>
</dbReference>
<dbReference type="InterPro" id="IPR011004">
    <property type="entry name" value="Trimer_LpxA-like_sf"/>
</dbReference>
<dbReference type="PANTHER" id="PTHR13072">
    <property type="entry name" value="DYNACTIN 6"/>
    <property type="match status" value="1"/>
</dbReference>
<dbReference type="PANTHER" id="PTHR13072:SF0">
    <property type="entry name" value="DYNACTIN SUBUNIT 6"/>
    <property type="match status" value="1"/>
</dbReference>
<dbReference type="SUPFAM" id="SSF51161">
    <property type="entry name" value="Trimeric LpxA-like enzymes"/>
    <property type="match status" value="1"/>
</dbReference>
<keyword id="KW-0137">Centromere</keyword>
<keyword id="KW-0158">Chromosome</keyword>
<keyword id="KW-0963">Cytoplasm</keyword>
<keyword id="KW-0206">Cytoskeleton</keyword>
<keyword id="KW-0995">Kinetochore</keyword>
<keyword id="KW-1185">Reference proteome</keyword>
<protein>
    <recommendedName>
        <fullName>Dynactin subunit 6</fullName>
    </recommendedName>
</protein>
<sequence>MADPSAKQTGQKSVKIAAGAVVCVESDIRGDVTIGARTVVHPKARIIAEAGPIVIGEGNLIEEQALIINSFPENLLPNTDDVEPKPMIIGVNNVFEVGCVCQALKIGDNNVIESKADVGRSVMLTSGCIVGSCCQIHTCEVIPENTVIYGSECLRRVQTERPQPQTLQLDFLMKILPNYHHLKKTVKSSGTPARS</sequence>
<gene>
    <name type="primary">dctn6</name>
    <name type="ORF">zgc:112102</name>
</gene>
<proteinExistence type="evidence at transcript level"/>
<evidence type="ECO:0000250" key="1"/>
<evidence type="ECO:0000250" key="2">
    <source>
        <dbReference type="UniProtKB" id="O00399"/>
    </source>
</evidence>
<evidence type="ECO:0000305" key="3"/>
<comment type="function">
    <text evidence="2">Part of the dynactin complex that activates the molecular motor dynein for ultra-processive transport along microtubules.</text>
</comment>
<comment type="subunit">
    <text evidence="1">Member of the pointed-end complex of the dynactin shoulder complex which contains dctn4, dctn5 and dctn6 subunits and Actr10. Within the complex dctn6 forms a heterodimer with dctn5. Interacts with plk1 (By similarity).</text>
</comment>
<comment type="subcellular location">
    <subcellularLocation>
        <location evidence="1">Cytoplasm</location>
        <location evidence="1">Cytoskeleton</location>
    </subcellularLocation>
    <subcellularLocation>
        <location evidence="1">Chromosome</location>
        <location evidence="1">Centromere</location>
        <location evidence="1">Kinetochore</location>
    </subcellularLocation>
</comment>
<comment type="similarity">
    <text evidence="3">Belongs to the dynactin subunits 5/6 family. Dynactin subunit 6 subfamily.</text>
</comment>
<name>DCTN6_DANRE</name>